<evidence type="ECO:0000255" key="1">
    <source>
        <dbReference type="PROSITE-ProRule" id="PRU01007"/>
    </source>
</evidence>
<evidence type="ECO:0000305" key="2"/>
<gene>
    <name type="primary">lysC</name>
    <name type="ordered locus">jhp_1150</name>
</gene>
<protein>
    <recommendedName>
        <fullName>Aspartokinase</fullName>
        <ecNumber>2.7.2.4</ecNumber>
    </recommendedName>
    <alternativeName>
        <fullName>Aspartate kinase</fullName>
    </alternativeName>
</protein>
<keyword id="KW-0028">Amino-acid biosynthesis</keyword>
<keyword id="KW-0067">ATP-binding</keyword>
<keyword id="KW-0220">Diaminopimelate biosynthesis</keyword>
<keyword id="KW-0418">Kinase</keyword>
<keyword id="KW-0457">Lysine biosynthesis</keyword>
<keyword id="KW-0547">Nucleotide-binding</keyword>
<keyword id="KW-0677">Repeat</keyword>
<keyword id="KW-0808">Transferase</keyword>
<reference key="1">
    <citation type="journal article" date="1999" name="Nature">
        <title>Genomic sequence comparison of two unrelated isolates of the human gastric pathogen Helicobacter pylori.</title>
        <authorList>
            <person name="Alm R.A."/>
            <person name="Ling L.-S.L."/>
            <person name="Moir D.T."/>
            <person name="King B.L."/>
            <person name="Brown E.D."/>
            <person name="Doig P.C."/>
            <person name="Smith D.R."/>
            <person name="Noonan B."/>
            <person name="Guild B.C."/>
            <person name="deJonge B.L."/>
            <person name="Carmel G."/>
            <person name="Tummino P.J."/>
            <person name="Caruso A."/>
            <person name="Uria-Nickelsen M."/>
            <person name="Mills D.M."/>
            <person name="Ives C."/>
            <person name="Gibson R."/>
            <person name="Merberg D."/>
            <person name="Mills S.D."/>
            <person name="Jiang Q."/>
            <person name="Taylor D.E."/>
            <person name="Vovis G.F."/>
            <person name="Trust T.J."/>
        </authorList>
    </citation>
    <scope>NUCLEOTIDE SEQUENCE [LARGE SCALE GENOMIC DNA]</scope>
    <source>
        <strain>J99 / ATCC 700824</strain>
    </source>
</reference>
<name>AK_HELPJ</name>
<feature type="chain" id="PRO_0000066678" description="Aspartokinase">
    <location>
        <begin position="1"/>
        <end position="405"/>
    </location>
</feature>
<feature type="domain" description="ACT 1" evidence="1">
    <location>
        <begin position="267"/>
        <end position="344"/>
    </location>
</feature>
<feature type="domain" description="ACT 2" evidence="1">
    <location>
        <begin position="345"/>
        <end position="405"/>
    </location>
</feature>
<accession>Q9ZJZ7</accession>
<dbReference type="EC" id="2.7.2.4"/>
<dbReference type="EMBL" id="AE001439">
    <property type="protein sequence ID" value="AAD06723.1"/>
    <property type="molecule type" value="Genomic_DNA"/>
</dbReference>
<dbReference type="PIR" id="H71843">
    <property type="entry name" value="H71843"/>
</dbReference>
<dbReference type="RefSeq" id="WP_000909636.1">
    <property type="nucleotide sequence ID" value="NZ_CP011330.1"/>
</dbReference>
<dbReference type="SMR" id="Q9ZJZ7"/>
<dbReference type="KEGG" id="hpj:jhp_1150"/>
<dbReference type="PATRIC" id="fig|85963.30.peg.1426"/>
<dbReference type="eggNOG" id="COG0527">
    <property type="taxonomic scope" value="Bacteria"/>
</dbReference>
<dbReference type="UniPathway" id="UPA00034">
    <property type="reaction ID" value="UER00015"/>
</dbReference>
<dbReference type="UniPathway" id="UPA00050">
    <property type="reaction ID" value="UER00461"/>
</dbReference>
<dbReference type="UniPathway" id="UPA00051">
    <property type="reaction ID" value="UER00462"/>
</dbReference>
<dbReference type="Proteomes" id="UP000000804">
    <property type="component" value="Chromosome"/>
</dbReference>
<dbReference type="GO" id="GO:0005829">
    <property type="term" value="C:cytosol"/>
    <property type="evidence" value="ECO:0007669"/>
    <property type="project" value="TreeGrafter"/>
</dbReference>
<dbReference type="GO" id="GO:0004072">
    <property type="term" value="F:aspartate kinase activity"/>
    <property type="evidence" value="ECO:0007669"/>
    <property type="project" value="UniProtKB-EC"/>
</dbReference>
<dbReference type="GO" id="GO:0005524">
    <property type="term" value="F:ATP binding"/>
    <property type="evidence" value="ECO:0007669"/>
    <property type="project" value="UniProtKB-KW"/>
</dbReference>
<dbReference type="GO" id="GO:0019877">
    <property type="term" value="P:diaminopimelate biosynthetic process"/>
    <property type="evidence" value="ECO:0007669"/>
    <property type="project" value="UniProtKB-KW"/>
</dbReference>
<dbReference type="GO" id="GO:0009090">
    <property type="term" value="P:homoserine biosynthetic process"/>
    <property type="evidence" value="ECO:0007669"/>
    <property type="project" value="TreeGrafter"/>
</dbReference>
<dbReference type="GO" id="GO:0009089">
    <property type="term" value="P:lysine biosynthetic process via diaminopimelate"/>
    <property type="evidence" value="ECO:0007669"/>
    <property type="project" value="UniProtKB-UniPathway"/>
</dbReference>
<dbReference type="GO" id="GO:0009088">
    <property type="term" value="P:threonine biosynthetic process"/>
    <property type="evidence" value="ECO:0007669"/>
    <property type="project" value="UniProtKB-UniPathway"/>
</dbReference>
<dbReference type="CDD" id="cd04261">
    <property type="entry name" value="AAK_AKii-LysC-BS"/>
    <property type="match status" value="1"/>
</dbReference>
<dbReference type="CDD" id="cd04923">
    <property type="entry name" value="ACT_AK-LysC-DapG-like_2"/>
    <property type="match status" value="1"/>
</dbReference>
<dbReference type="CDD" id="cd04913">
    <property type="entry name" value="ACT_AKii-LysC-BS-like_1"/>
    <property type="match status" value="1"/>
</dbReference>
<dbReference type="FunFam" id="3.30.2130.10:FF:000002">
    <property type="entry name" value="Aspartokinase"/>
    <property type="match status" value="1"/>
</dbReference>
<dbReference type="FunFam" id="3.40.1160.10:FF:000002">
    <property type="entry name" value="Aspartokinase"/>
    <property type="match status" value="1"/>
</dbReference>
<dbReference type="Gene3D" id="3.40.1160.10">
    <property type="entry name" value="Acetylglutamate kinase-like"/>
    <property type="match status" value="1"/>
</dbReference>
<dbReference type="Gene3D" id="3.30.2130.10">
    <property type="entry name" value="VC0802-like"/>
    <property type="match status" value="1"/>
</dbReference>
<dbReference type="InterPro" id="IPR036393">
    <property type="entry name" value="AceGlu_kinase-like_sf"/>
</dbReference>
<dbReference type="InterPro" id="IPR045865">
    <property type="entry name" value="ACT-like_dom_sf"/>
</dbReference>
<dbReference type="InterPro" id="IPR054352">
    <property type="entry name" value="ACT_Aspartokinase"/>
</dbReference>
<dbReference type="InterPro" id="IPR002912">
    <property type="entry name" value="ACT_dom"/>
</dbReference>
<dbReference type="InterPro" id="IPR041740">
    <property type="entry name" value="AKii-LysC-BS"/>
</dbReference>
<dbReference type="InterPro" id="IPR001048">
    <property type="entry name" value="Asp/Glu/Uridylate_kinase"/>
</dbReference>
<dbReference type="InterPro" id="IPR005260">
    <property type="entry name" value="Asp_kin_monofn"/>
</dbReference>
<dbReference type="InterPro" id="IPR001341">
    <property type="entry name" value="Asp_kinase"/>
</dbReference>
<dbReference type="InterPro" id="IPR018042">
    <property type="entry name" value="Aspartate_kinase_CS"/>
</dbReference>
<dbReference type="NCBIfam" id="TIGR00656">
    <property type="entry name" value="asp_kin_monofn"/>
    <property type="match status" value="1"/>
</dbReference>
<dbReference type="NCBIfam" id="TIGR00657">
    <property type="entry name" value="asp_kinases"/>
    <property type="match status" value="1"/>
</dbReference>
<dbReference type="NCBIfam" id="NF005154">
    <property type="entry name" value="PRK06635.1-2"/>
    <property type="match status" value="1"/>
</dbReference>
<dbReference type="NCBIfam" id="NF005155">
    <property type="entry name" value="PRK06635.1-4"/>
    <property type="match status" value="1"/>
</dbReference>
<dbReference type="PANTHER" id="PTHR21499">
    <property type="entry name" value="ASPARTATE KINASE"/>
    <property type="match status" value="1"/>
</dbReference>
<dbReference type="PANTHER" id="PTHR21499:SF3">
    <property type="entry name" value="ASPARTOKINASE"/>
    <property type="match status" value="1"/>
</dbReference>
<dbReference type="Pfam" id="PF00696">
    <property type="entry name" value="AA_kinase"/>
    <property type="match status" value="1"/>
</dbReference>
<dbReference type="Pfam" id="PF01842">
    <property type="entry name" value="ACT"/>
    <property type="match status" value="1"/>
</dbReference>
<dbReference type="Pfam" id="PF22468">
    <property type="entry name" value="ACT_9"/>
    <property type="match status" value="1"/>
</dbReference>
<dbReference type="PIRSF" id="PIRSF000726">
    <property type="entry name" value="Asp_kin"/>
    <property type="match status" value="1"/>
</dbReference>
<dbReference type="SUPFAM" id="SSF55021">
    <property type="entry name" value="ACT-like"/>
    <property type="match status" value="2"/>
</dbReference>
<dbReference type="SUPFAM" id="SSF53633">
    <property type="entry name" value="Carbamate kinase-like"/>
    <property type="match status" value="1"/>
</dbReference>
<dbReference type="PROSITE" id="PS51671">
    <property type="entry name" value="ACT"/>
    <property type="match status" value="1"/>
</dbReference>
<dbReference type="PROSITE" id="PS00324">
    <property type="entry name" value="ASPARTOKINASE"/>
    <property type="match status" value="1"/>
</dbReference>
<comment type="catalytic activity">
    <reaction>
        <text>L-aspartate + ATP = 4-phospho-L-aspartate + ADP</text>
        <dbReference type="Rhea" id="RHEA:23776"/>
        <dbReference type="ChEBI" id="CHEBI:29991"/>
        <dbReference type="ChEBI" id="CHEBI:30616"/>
        <dbReference type="ChEBI" id="CHEBI:57535"/>
        <dbReference type="ChEBI" id="CHEBI:456216"/>
        <dbReference type="EC" id="2.7.2.4"/>
    </reaction>
</comment>
<comment type="pathway">
    <text>Amino-acid biosynthesis; L-lysine biosynthesis via DAP pathway; (S)-tetrahydrodipicolinate from L-aspartate: step 1/4.</text>
</comment>
<comment type="pathway">
    <text>Amino-acid biosynthesis; L-methionine biosynthesis via de novo pathway; L-homoserine from L-aspartate: step 1/3.</text>
</comment>
<comment type="pathway">
    <text>Amino-acid biosynthesis; L-threonine biosynthesis; L-threonine from L-aspartate: step 1/5.</text>
</comment>
<comment type="similarity">
    <text evidence="2">Belongs to the aspartokinase family.</text>
</comment>
<sequence>MLIVQKYGGTSMGSIERIHNVAQRVLESVKLGHQVVVVVSAMSGETDRLLEFGKNFSHNPNKREMDRIVSAGEWISSAALSMALERYGHRAISLSGKEAGILTSSHFQNAVIQSIDTQRITELLEKNYIVVIAGFQGADIQGETTTLGRGGSDLSAVALAGALKAHLCEIYTDVDGVYTTDPRIEEKAQKIAQISYDEMLELASMGAKVLLNRSVELAKKLSVKLVTRNSFNHSEGTLIVAEKDFKGERMETPIVSGIALDKNQARVSMEGVEDRPGIAAEIFGALAEYRINVDMIVQTIGRDGKTDLDFTIVKTQIEETKQALKPFLAQMDSIDYDENIAKVSIVGVGMKSHSGVASIAFKALAKDNINIMMISTSEIKISVLIDIKYAELAVRTLHAVYQLDQ</sequence>
<organism>
    <name type="scientific">Helicobacter pylori (strain J99 / ATCC 700824)</name>
    <name type="common">Campylobacter pylori J99</name>
    <dbReference type="NCBI Taxonomy" id="85963"/>
    <lineage>
        <taxon>Bacteria</taxon>
        <taxon>Pseudomonadati</taxon>
        <taxon>Campylobacterota</taxon>
        <taxon>Epsilonproteobacteria</taxon>
        <taxon>Campylobacterales</taxon>
        <taxon>Helicobacteraceae</taxon>
        <taxon>Helicobacter</taxon>
    </lineage>
</organism>
<proteinExistence type="inferred from homology"/>